<name>IF1_SYNJB</name>
<feature type="chain" id="PRO_0000263887" description="Translation initiation factor IF-1">
    <location>
        <begin position="1"/>
        <end position="74"/>
    </location>
</feature>
<feature type="domain" description="S1-like" evidence="1">
    <location>
        <begin position="1"/>
        <end position="72"/>
    </location>
</feature>
<dbReference type="EMBL" id="CP000240">
    <property type="protein sequence ID" value="ABD03548.1"/>
    <property type="molecule type" value="Genomic_DNA"/>
</dbReference>
<dbReference type="RefSeq" id="WP_011434173.1">
    <property type="nucleotide sequence ID" value="NC_007776.1"/>
</dbReference>
<dbReference type="SMR" id="Q2JIK6"/>
<dbReference type="STRING" id="321332.CYB_2618"/>
<dbReference type="KEGG" id="cyb:CYB_2618"/>
<dbReference type="eggNOG" id="COG0361">
    <property type="taxonomic scope" value="Bacteria"/>
</dbReference>
<dbReference type="HOGENOM" id="CLU_151267_1_0_3"/>
<dbReference type="OrthoDB" id="9803250at2"/>
<dbReference type="Proteomes" id="UP000001938">
    <property type="component" value="Chromosome"/>
</dbReference>
<dbReference type="GO" id="GO:0005829">
    <property type="term" value="C:cytosol"/>
    <property type="evidence" value="ECO:0007669"/>
    <property type="project" value="TreeGrafter"/>
</dbReference>
<dbReference type="GO" id="GO:0043022">
    <property type="term" value="F:ribosome binding"/>
    <property type="evidence" value="ECO:0007669"/>
    <property type="project" value="UniProtKB-UniRule"/>
</dbReference>
<dbReference type="GO" id="GO:0019843">
    <property type="term" value="F:rRNA binding"/>
    <property type="evidence" value="ECO:0007669"/>
    <property type="project" value="UniProtKB-UniRule"/>
</dbReference>
<dbReference type="GO" id="GO:0003743">
    <property type="term" value="F:translation initiation factor activity"/>
    <property type="evidence" value="ECO:0007669"/>
    <property type="project" value="UniProtKB-UniRule"/>
</dbReference>
<dbReference type="CDD" id="cd04451">
    <property type="entry name" value="S1_IF1"/>
    <property type="match status" value="1"/>
</dbReference>
<dbReference type="FunFam" id="2.40.50.140:FF:000002">
    <property type="entry name" value="Translation initiation factor IF-1"/>
    <property type="match status" value="1"/>
</dbReference>
<dbReference type="Gene3D" id="2.40.50.140">
    <property type="entry name" value="Nucleic acid-binding proteins"/>
    <property type="match status" value="1"/>
</dbReference>
<dbReference type="HAMAP" id="MF_00075">
    <property type="entry name" value="IF_1"/>
    <property type="match status" value="1"/>
</dbReference>
<dbReference type="InterPro" id="IPR012340">
    <property type="entry name" value="NA-bd_OB-fold"/>
</dbReference>
<dbReference type="InterPro" id="IPR006196">
    <property type="entry name" value="RNA-binding_domain_S1_IF1"/>
</dbReference>
<dbReference type="InterPro" id="IPR003029">
    <property type="entry name" value="S1_domain"/>
</dbReference>
<dbReference type="InterPro" id="IPR004368">
    <property type="entry name" value="TIF_IF1"/>
</dbReference>
<dbReference type="NCBIfam" id="TIGR00008">
    <property type="entry name" value="infA"/>
    <property type="match status" value="1"/>
</dbReference>
<dbReference type="PANTHER" id="PTHR33370">
    <property type="entry name" value="TRANSLATION INITIATION FACTOR IF-1, CHLOROPLASTIC"/>
    <property type="match status" value="1"/>
</dbReference>
<dbReference type="PANTHER" id="PTHR33370:SF1">
    <property type="entry name" value="TRANSLATION INITIATION FACTOR IF-1, CHLOROPLASTIC"/>
    <property type="match status" value="1"/>
</dbReference>
<dbReference type="Pfam" id="PF01176">
    <property type="entry name" value="eIF-1a"/>
    <property type="match status" value="1"/>
</dbReference>
<dbReference type="SMART" id="SM00316">
    <property type="entry name" value="S1"/>
    <property type="match status" value="1"/>
</dbReference>
<dbReference type="SUPFAM" id="SSF50249">
    <property type="entry name" value="Nucleic acid-binding proteins"/>
    <property type="match status" value="1"/>
</dbReference>
<dbReference type="PROSITE" id="PS50832">
    <property type="entry name" value="S1_IF1_TYPE"/>
    <property type="match status" value="1"/>
</dbReference>
<sequence length="74" mass="8493">MSKEDAIEMEGVVTESLPNAMFRVDLDNGFNVLAHISGKIRRNYIKILPGDRVKVELSPYDLNKGRITYRLKKK</sequence>
<protein>
    <recommendedName>
        <fullName evidence="1">Translation initiation factor IF-1</fullName>
    </recommendedName>
</protein>
<gene>
    <name evidence="1" type="primary">infA</name>
    <name type="ordered locus">CYB_2618</name>
</gene>
<organism>
    <name type="scientific">Synechococcus sp. (strain JA-2-3B'a(2-13))</name>
    <name type="common">Cyanobacteria bacterium Yellowstone B-Prime</name>
    <dbReference type="NCBI Taxonomy" id="321332"/>
    <lineage>
        <taxon>Bacteria</taxon>
        <taxon>Bacillati</taxon>
        <taxon>Cyanobacteriota</taxon>
        <taxon>Cyanophyceae</taxon>
        <taxon>Synechococcales</taxon>
        <taxon>Synechococcaceae</taxon>
        <taxon>Synechococcus</taxon>
    </lineage>
</organism>
<reference key="1">
    <citation type="journal article" date="2007" name="ISME J.">
        <title>Population level functional diversity in a microbial community revealed by comparative genomic and metagenomic analyses.</title>
        <authorList>
            <person name="Bhaya D."/>
            <person name="Grossman A.R."/>
            <person name="Steunou A.-S."/>
            <person name="Khuri N."/>
            <person name="Cohan F.M."/>
            <person name="Hamamura N."/>
            <person name="Melendrez M.C."/>
            <person name="Bateson M.M."/>
            <person name="Ward D.M."/>
            <person name="Heidelberg J.F."/>
        </authorList>
    </citation>
    <scope>NUCLEOTIDE SEQUENCE [LARGE SCALE GENOMIC DNA]</scope>
    <source>
        <strain>JA-2-3B'a(2-13)</strain>
    </source>
</reference>
<evidence type="ECO:0000255" key="1">
    <source>
        <dbReference type="HAMAP-Rule" id="MF_00075"/>
    </source>
</evidence>
<keyword id="KW-0963">Cytoplasm</keyword>
<keyword id="KW-0396">Initiation factor</keyword>
<keyword id="KW-0648">Protein biosynthesis</keyword>
<keyword id="KW-1185">Reference proteome</keyword>
<keyword id="KW-0694">RNA-binding</keyword>
<keyword id="KW-0699">rRNA-binding</keyword>
<accession>Q2JIK6</accession>
<proteinExistence type="inferred from homology"/>
<comment type="function">
    <text evidence="1">One of the essential components for the initiation of protein synthesis. Stabilizes the binding of IF-2 and IF-3 on the 30S subunit to which N-formylmethionyl-tRNA(fMet) subsequently binds. Helps modulate mRNA selection, yielding the 30S pre-initiation complex (PIC). Upon addition of the 50S ribosomal subunit IF-1, IF-2 and IF-3 are released leaving the mature 70S translation initiation complex.</text>
</comment>
<comment type="subunit">
    <text evidence="1">Component of the 30S ribosomal translation pre-initiation complex which assembles on the 30S ribosome in the order IF-2 and IF-3, IF-1 and N-formylmethionyl-tRNA(fMet); mRNA recruitment can occur at any time during PIC assembly.</text>
</comment>
<comment type="subcellular location">
    <subcellularLocation>
        <location evidence="1">Cytoplasm</location>
    </subcellularLocation>
</comment>
<comment type="similarity">
    <text evidence="1">Belongs to the IF-1 family.</text>
</comment>